<reference key="1">
    <citation type="journal article" date="1998" name="Nature">
        <title>Deciphering the biology of Mycobacterium tuberculosis from the complete genome sequence.</title>
        <authorList>
            <person name="Cole S.T."/>
            <person name="Brosch R."/>
            <person name="Parkhill J."/>
            <person name="Garnier T."/>
            <person name="Churcher C.M."/>
            <person name="Harris D.E."/>
            <person name="Gordon S.V."/>
            <person name="Eiglmeier K."/>
            <person name="Gas S."/>
            <person name="Barry C.E. III"/>
            <person name="Tekaia F."/>
            <person name="Badcock K."/>
            <person name="Basham D."/>
            <person name="Brown D."/>
            <person name="Chillingworth T."/>
            <person name="Connor R."/>
            <person name="Davies R.M."/>
            <person name="Devlin K."/>
            <person name="Feltwell T."/>
            <person name="Gentles S."/>
            <person name="Hamlin N."/>
            <person name="Holroyd S."/>
            <person name="Hornsby T."/>
            <person name="Jagels K."/>
            <person name="Krogh A."/>
            <person name="McLean J."/>
            <person name="Moule S."/>
            <person name="Murphy L.D."/>
            <person name="Oliver S."/>
            <person name="Osborne J."/>
            <person name="Quail M.A."/>
            <person name="Rajandream M.A."/>
            <person name="Rogers J."/>
            <person name="Rutter S."/>
            <person name="Seeger K."/>
            <person name="Skelton S."/>
            <person name="Squares S."/>
            <person name="Squares R."/>
            <person name="Sulston J.E."/>
            <person name="Taylor K."/>
            <person name="Whitehead S."/>
            <person name="Barrell B.G."/>
        </authorList>
    </citation>
    <scope>NUCLEOTIDE SEQUENCE [LARGE SCALE GENOMIC DNA]</scope>
    <source>
        <strain>ATCC 25618 / H37Rv</strain>
    </source>
</reference>
<reference key="2">
    <citation type="journal article" date="2011" name="Microbiology">
        <title>Biochemical and transcription analysis of acetohydroxyacid synthase isoforms in Mycobacterium tuberculosis identifies these enzymes as potential targets for drug development.</title>
        <authorList>
            <person name="Singh V."/>
            <person name="Chandra D."/>
            <person name="Srivastava B.S."/>
            <person name="Srivastava R."/>
        </authorList>
    </citation>
    <scope>FUNCTION</scope>
    <scope>CATALYTIC ACTIVITY</scope>
    <scope>INDUCTION</scope>
    <scope>BIOPHYSICOCHEMICAL PROPERTIES</scope>
</reference>
<reference key="3">
    <citation type="journal article" date="2011" name="Mol. Cell. Proteomics">
        <title>Proteogenomic analysis of Mycobacterium tuberculosis by high resolution mass spectrometry.</title>
        <authorList>
            <person name="Kelkar D.S."/>
            <person name="Kumar D."/>
            <person name="Kumar P."/>
            <person name="Balakrishnan L."/>
            <person name="Muthusamy B."/>
            <person name="Yadav A.K."/>
            <person name="Shrivastava P."/>
            <person name="Marimuthu A."/>
            <person name="Anand S."/>
            <person name="Sundaram H."/>
            <person name="Kingsbury R."/>
            <person name="Harsha H.C."/>
            <person name="Nair B."/>
            <person name="Prasad T.S."/>
            <person name="Chauhan D.S."/>
            <person name="Katoch K."/>
            <person name="Katoch V.M."/>
            <person name="Kumar P."/>
            <person name="Chaerkady R."/>
            <person name="Ramachandran S."/>
            <person name="Dash D."/>
            <person name="Pandey A."/>
        </authorList>
    </citation>
    <scope>ACETYLATION [LARGE SCALE ANALYSIS] AT SER-2</scope>
    <scope>CLEAVAGE OF INITIATOR METHIONINE [LARGE SCALE ANALYSIS]</scope>
    <scope>IDENTIFICATION BY MASS SPECTROMETRY [LARGE SCALE ANALYSIS]</scope>
    <source>
        <strain>ATCC 25618 / H37Rv</strain>
    </source>
</reference>
<evidence type="ECO:0000250" key="1"/>
<evidence type="ECO:0000269" key="2">
    <source>
    </source>
</evidence>
<evidence type="ECO:0000305" key="3"/>
<evidence type="ECO:0007744" key="4">
    <source>
    </source>
</evidence>
<proteinExistence type="evidence at protein level"/>
<organism>
    <name type="scientific">Mycobacterium tuberculosis (strain ATCC 25618 / H37Rv)</name>
    <dbReference type="NCBI Taxonomy" id="83332"/>
    <lineage>
        <taxon>Bacteria</taxon>
        <taxon>Bacillati</taxon>
        <taxon>Actinomycetota</taxon>
        <taxon>Actinomycetes</taxon>
        <taxon>Mycobacteriales</taxon>
        <taxon>Mycobacteriaceae</taxon>
        <taxon>Mycobacterium</taxon>
        <taxon>Mycobacterium tuberculosis complex</taxon>
    </lineage>
</organism>
<feature type="initiator methionine" description="Removed" evidence="4">
    <location>
        <position position="1"/>
    </location>
</feature>
<feature type="chain" id="PRO_0000090805" description="Acetolactate synthase large subunit IlvG">
    <location>
        <begin position="2"/>
        <end position="547"/>
    </location>
</feature>
<feature type="region of interest" description="Thiamine pyrophosphate binding">
    <location>
        <begin position="388"/>
        <end position="468"/>
    </location>
</feature>
<feature type="binding site" evidence="1">
    <location>
        <position position="57"/>
    </location>
    <ligand>
        <name>thiamine diphosphate</name>
        <dbReference type="ChEBI" id="CHEBI:58937"/>
    </ligand>
</feature>
<feature type="binding site" evidence="1">
    <location>
        <position position="159"/>
    </location>
    <ligand>
        <name>FAD</name>
        <dbReference type="ChEBI" id="CHEBI:57692"/>
    </ligand>
</feature>
<feature type="binding site" evidence="1">
    <location>
        <begin position="299"/>
        <end position="318"/>
    </location>
    <ligand>
        <name>FAD</name>
        <dbReference type="ChEBI" id="CHEBI:57692"/>
    </ligand>
</feature>
<feature type="binding site" evidence="1">
    <location>
        <position position="439"/>
    </location>
    <ligand>
        <name>Mg(2+)</name>
        <dbReference type="ChEBI" id="CHEBI:18420"/>
    </ligand>
</feature>
<feature type="binding site" evidence="1">
    <location>
        <position position="466"/>
    </location>
    <ligand>
        <name>Mg(2+)</name>
        <dbReference type="ChEBI" id="CHEBI:18420"/>
    </ligand>
</feature>
<feature type="modified residue" description="N-acetylserine" evidence="4">
    <location>
        <position position="2"/>
    </location>
</feature>
<sequence length="547" mass="57521">MSTDTAPAQTMHAGRLIARRLKASGIDTVFTLSGGHLFSIYDGCREEGIRLIDTRHEQTAAFAAEGWSKVTRVPGVAALTAGPGITNGMSAMAAAQQNQSPLVVLGGRAPALRWGMGSLQEIDHVPFVAPVARFAATAQSAENAGLLVDQALQAAVSAPSGVAFVDFPMDHAFSMSSDNGRPGALTELPAGPTPAGDALDRAAGLLSTAQRPVIMAGTNVWWGHAEAALLRLVEERHIPVLMNGMARGVVPADHRLAFSRARSKALGEADVALIVGVPMDFRLGFGGVFGSTTQLIVADRVEPAREHPRPVAAGLYGDLTATLSALAGSGGTDHQGWIEELATAETMARDLEKAELVDDRIPLHPMRVYAELAALLERDALVVIDAGDFGSYAGRMIDSYLPGCWLDSGPFGCLGSGPGYALAAKLARPQRQVVLLQGDGAFGFSGMEWDTLVRHNVAVVSVIGNNGIWGLEKHPMEALYGYSVVAELRPGTRYDEVVRALGGHGELVSVPAELRPALERAFASGLPAVVNVLTDPSVAYPRRSNLA</sequence>
<accession>P9WG39</accession>
<accession>L0T9C7</accession>
<accession>P66946</accession>
<accession>Q50613</accession>
<protein>
    <recommendedName>
        <fullName>Acetolactate synthase large subunit IlvG</fullName>
        <shortName>ALS</shortName>
        <ecNumber>2.2.1.6</ecNumber>
    </recommendedName>
    <alternativeName>
        <fullName>Acetohydroxy-acid synthase large subunit</fullName>
        <shortName>AHAS</shortName>
    </alternativeName>
</protein>
<name>ILVG_MYCTU</name>
<dbReference type="EC" id="2.2.1.6"/>
<dbReference type="EMBL" id="AL123456">
    <property type="protein sequence ID" value="CCP44586.1"/>
    <property type="molecule type" value="Genomic_DNA"/>
</dbReference>
<dbReference type="PIR" id="E70720">
    <property type="entry name" value="E70720"/>
</dbReference>
<dbReference type="RefSeq" id="NP_216336.1">
    <property type="nucleotide sequence ID" value="NC_000962.3"/>
</dbReference>
<dbReference type="RefSeq" id="WP_003409218.1">
    <property type="nucleotide sequence ID" value="NZ_NVQJ01000013.1"/>
</dbReference>
<dbReference type="SMR" id="P9WG39"/>
<dbReference type="FunCoup" id="P9WG39">
    <property type="interactions" value="162"/>
</dbReference>
<dbReference type="STRING" id="83332.Rv1820"/>
<dbReference type="iPTMnet" id="P9WG39"/>
<dbReference type="PaxDb" id="83332-Rv1820"/>
<dbReference type="DNASU" id="885738"/>
<dbReference type="GeneID" id="885738"/>
<dbReference type="KEGG" id="mtu:Rv1820"/>
<dbReference type="KEGG" id="mtv:RVBD_1820"/>
<dbReference type="TubercuList" id="Rv1820"/>
<dbReference type="eggNOG" id="COG0028">
    <property type="taxonomic scope" value="Bacteria"/>
</dbReference>
<dbReference type="InParanoid" id="P9WG39"/>
<dbReference type="OrthoDB" id="4494979at2"/>
<dbReference type="PhylomeDB" id="P9WG39"/>
<dbReference type="BRENDA" id="2.2.1.6">
    <property type="organism ID" value="3445"/>
</dbReference>
<dbReference type="UniPathway" id="UPA00047">
    <property type="reaction ID" value="UER00055"/>
</dbReference>
<dbReference type="UniPathway" id="UPA00049">
    <property type="reaction ID" value="UER00059"/>
</dbReference>
<dbReference type="Proteomes" id="UP000001584">
    <property type="component" value="Chromosome"/>
</dbReference>
<dbReference type="GO" id="GO:0005948">
    <property type="term" value="C:acetolactate synthase complex"/>
    <property type="evidence" value="ECO:0000318"/>
    <property type="project" value="GO_Central"/>
</dbReference>
<dbReference type="GO" id="GO:0003984">
    <property type="term" value="F:acetolactate synthase activity"/>
    <property type="evidence" value="ECO:0000314"/>
    <property type="project" value="MTBBASE"/>
</dbReference>
<dbReference type="GO" id="GO:0050660">
    <property type="term" value="F:flavin adenine dinucleotide binding"/>
    <property type="evidence" value="ECO:0000318"/>
    <property type="project" value="GO_Central"/>
</dbReference>
<dbReference type="GO" id="GO:0000287">
    <property type="term" value="F:magnesium ion binding"/>
    <property type="evidence" value="ECO:0000314"/>
    <property type="project" value="MTBBASE"/>
</dbReference>
<dbReference type="GO" id="GO:0030976">
    <property type="term" value="F:thiamine pyrophosphate binding"/>
    <property type="evidence" value="ECO:0000314"/>
    <property type="project" value="MTBBASE"/>
</dbReference>
<dbReference type="GO" id="GO:0009082">
    <property type="term" value="P:branched-chain amino acid biosynthetic process"/>
    <property type="evidence" value="ECO:0000314"/>
    <property type="project" value="MTBBASE"/>
</dbReference>
<dbReference type="GO" id="GO:0009097">
    <property type="term" value="P:isoleucine biosynthetic process"/>
    <property type="evidence" value="ECO:0000250"/>
    <property type="project" value="UniProtKB"/>
</dbReference>
<dbReference type="GO" id="GO:0009099">
    <property type="term" value="P:L-valine biosynthetic process"/>
    <property type="evidence" value="ECO:0000250"/>
    <property type="project" value="UniProtKB"/>
</dbReference>
<dbReference type="CDD" id="cd02004">
    <property type="entry name" value="TPP_BZL_OCoD_HPCL"/>
    <property type="match status" value="1"/>
</dbReference>
<dbReference type="CDD" id="cd07035">
    <property type="entry name" value="TPP_PYR_POX_like"/>
    <property type="match status" value="1"/>
</dbReference>
<dbReference type="FunFam" id="3.40.50.970:FF:000044">
    <property type="entry name" value="Putative acetolactate synthase IlvG"/>
    <property type="match status" value="1"/>
</dbReference>
<dbReference type="FunFam" id="3.40.50.970:FF:000088">
    <property type="entry name" value="Putative acetolactate synthase IlvG"/>
    <property type="match status" value="1"/>
</dbReference>
<dbReference type="Gene3D" id="3.40.50.970">
    <property type="match status" value="2"/>
</dbReference>
<dbReference type="Gene3D" id="3.40.50.1220">
    <property type="entry name" value="TPP-binding domain"/>
    <property type="match status" value="1"/>
</dbReference>
<dbReference type="InterPro" id="IPR029035">
    <property type="entry name" value="DHS-like_NAD/FAD-binding_dom"/>
</dbReference>
<dbReference type="InterPro" id="IPR029061">
    <property type="entry name" value="THDP-binding"/>
</dbReference>
<dbReference type="InterPro" id="IPR012000">
    <property type="entry name" value="Thiamin_PyroP_enz_cen_dom"/>
</dbReference>
<dbReference type="InterPro" id="IPR012001">
    <property type="entry name" value="Thiamin_PyroP_enz_TPP-bd_dom"/>
</dbReference>
<dbReference type="InterPro" id="IPR000399">
    <property type="entry name" value="TPP-bd_CS"/>
</dbReference>
<dbReference type="InterPro" id="IPR045229">
    <property type="entry name" value="TPP_enz"/>
</dbReference>
<dbReference type="InterPro" id="IPR011766">
    <property type="entry name" value="TPP_enzyme_TPP-bd"/>
</dbReference>
<dbReference type="NCBIfam" id="NF004516">
    <property type="entry name" value="PRK05858.1"/>
    <property type="match status" value="1"/>
</dbReference>
<dbReference type="PANTHER" id="PTHR18968:SF166">
    <property type="entry name" value="2-HYDROXYACYL-COA LYASE 2"/>
    <property type="match status" value="1"/>
</dbReference>
<dbReference type="PANTHER" id="PTHR18968">
    <property type="entry name" value="THIAMINE PYROPHOSPHATE ENZYMES"/>
    <property type="match status" value="1"/>
</dbReference>
<dbReference type="Pfam" id="PF02775">
    <property type="entry name" value="TPP_enzyme_C"/>
    <property type="match status" value="1"/>
</dbReference>
<dbReference type="Pfam" id="PF00205">
    <property type="entry name" value="TPP_enzyme_M"/>
    <property type="match status" value="1"/>
</dbReference>
<dbReference type="Pfam" id="PF02776">
    <property type="entry name" value="TPP_enzyme_N"/>
    <property type="match status" value="1"/>
</dbReference>
<dbReference type="SUPFAM" id="SSF52467">
    <property type="entry name" value="DHS-like NAD/FAD-binding domain"/>
    <property type="match status" value="1"/>
</dbReference>
<dbReference type="SUPFAM" id="SSF52518">
    <property type="entry name" value="Thiamin diphosphate-binding fold (THDP-binding)"/>
    <property type="match status" value="2"/>
</dbReference>
<dbReference type="PROSITE" id="PS00187">
    <property type="entry name" value="TPP_ENZYMES"/>
    <property type="match status" value="1"/>
</dbReference>
<gene>
    <name type="primary">ilvG</name>
    <name type="ordered locus">Rv1820</name>
    <name type="ORF">MTCY1A11.23c</name>
</gene>
<comment type="function">
    <text evidence="2">Catalyzes the conversion of 2 pyruvate molecules into acetolactate in the first common step of the biosynthetic pathway of the branched-amino acids such as leucine, isoleucine, and valine.</text>
</comment>
<comment type="catalytic activity">
    <reaction evidence="2">
        <text>2 pyruvate + H(+) = (2S)-2-acetolactate + CO2</text>
        <dbReference type="Rhea" id="RHEA:25249"/>
        <dbReference type="ChEBI" id="CHEBI:15361"/>
        <dbReference type="ChEBI" id="CHEBI:15378"/>
        <dbReference type="ChEBI" id="CHEBI:16526"/>
        <dbReference type="ChEBI" id="CHEBI:58476"/>
        <dbReference type="EC" id="2.2.1.6"/>
    </reaction>
</comment>
<comment type="cofactor">
    <cofactor evidence="1">
        <name>Mg(2+)</name>
        <dbReference type="ChEBI" id="CHEBI:18420"/>
    </cofactor>
    <text evidence="1">Binds 1 Mg(2+) ion per subunit.</text>
</comment>
<comment type="cofactor">
    <cofactor evidence="1">
        <name>thiamine diphosphate</name>
        <dbReference type="ChEBI" id="CHEBI:58937"/>
    </cofactor>
    <text evidence="1">Binds 1 thiamine pyrophosphate per subunit.</text>
</comment>
<comment type="biophysicochemical properties">
    <kinetics>
        <KM evidence="2">11.89 mM for pyruvate</KM>
        <Vmax evidence="2">1.39 umol/min/mg enzyme</Vmax>
    </kinetics>
    <phDependence>
        <text evidence="2">Optimum pH is between 6 and 7.</text>
    </phDependence>
    <temperatureDependence>
        <text evidence="2">Optimum temperature is between 35 and 40 degrees Celsius.</text>
    </temperatureDependence>
</comment>
<comment type="pathway">
    <text>Amino-acid biosynthesis; L-isoleucine biosynthesis; L-isoleucine from 2-oxobutanoate: step 1/4.</text>
</comment>
<comment type="pathway">
    <text>Amino-acid biosynthesis; L-valine biosynthesis; L-valine from pyruvate: step 1/4.</text>
</comment>
<comment type="subunit">
    <text evidence="1">Heterodimer of large catalytic subunit and small regulatory subunit.</text>
</comment>
<comment type="induction">
    <text evidence="2">The expression is almost identical during the mid-exponential and extended stationary phase.</text>
</comment>
<comment type="similarity">
    <text evidence="3">Belongs to the TPP enzyme family.</text>
</comment>
<keyword id="KW-0007">Acetylation</keyword>
<keyword id="KW-0028">Amino-acid biosynthesis</keyword>
<keyword id="KW-0100">Branched-chain amino acid biosynthesis</keyword>
<keyword id="KW-0274">FAD</keyword>
<keyword id="KW-0285">Flavoprotein</keyword>
<keyword id="KW-0460">Magnesium</keyword>
<keyword id="KW-0479">Metal-binding</keyword>
<keyword id="KW-1185">Reference proteome</keyword>
<keyword id="KW-0786">Thiamine pyrophosphate</keyword>
<keyword id="KW-0808">Transferase</keyword>